<keyword id="KW-0240">DNA-directed RNA polymerase</keyword>
<keyword id="KW-0460">Magnesium</keyword>
<keyword id="KW-0479">Metal-binding</keyword>
<keyword id="KW-0548">Nucleotidyltransferase</keyword>
<keyword id="KW-1185">Reference proteome</keyword>
<keyword id="KW-0804">Transcription</keyword>
<keyword id="KW-0808">Transferase</keyword>
<keyword id="KW-0862">Zinc</keyword>
<reference key="1">
    <citation type="journal article" date="2004" name="Genome Res.">
        <title>The genome sequence of Mycoplasma mycoides subsp. mycoides SC type strain PG1T, the causative agent of contagious bovine pleuropneumonia (CBPP).</title>
        <authorList>
            <person name="Westberg J."/>
            <person name="Persson A."/>
            <person name="Holmberg A."/>
            <person name="Goesmann A."/>
            <person name="Lundeberg J."/>
            <person name="Johansson K.-E."/>
            <person name="Pettersson B."/>
            <person name="Uhlen M."/>
        </authorList>
    </citation>
    <scope>NUCLEOTIDE SEQUENCE [LARGE SCALE GENOMIC DNA]</scope>
    <source>
        <strain>CCUG 32753 / NCTC 10114 / PG1</strain>
    </source>
</reference>
<organism>
    <name type="scientific">Mycoplasma mycoides subsp. mycoides SC (strain CCUG 32753 / NCTC 10114 / PG1)</name>
    <dbReference type="NCBI Taxonomy" id="272632"/>
    <lineage>
        <taxon>Bacteria</taxon>
        <taxon>Bacillati</taxon>
        <taxon>Mycoplasmatota</taxon>
        <taxon>Mollicutes</taxon>
        <taxon>Mycoplasmataceae</taxon>
        <taxon>Mycoplasma</taxon>
    </lineage>
</organism>
<feature type="chain" id="PRO_0000225553" description="DNA-directed RNA polymerase subunit beta'">
    <location>
        <begin position="1"/>
        <end position="1255"/>
    </location>
</feature>
<feature type="binding site" evidence="1">
    <location>
        <position position="60"/>
    </location>
    <ligand>
        <name>Zn(2+)</name>
        <dbReference type="ChEBI" id="CHEBI:29105"/>
        <label>1</label>
    </ligand>
</feature>
<feature type="binding site" evidence="1">
    <location>
        <position position="62"/>
    </location>
    <ligand>
        <name>Zn(2+)</name>
        <dbReference type="ChEBI" id="CHEBI:29105"/>
        <label>1</label>
    </ligand>
</feature>
<feature type="binding site" evidence="1">
    <location>
        <position position="77"/>
    </location>
    <ligand>
        <name>Zn(2+)</name>
        <dbReference type="ChEBI" id="CHEBI:29105"/>
        <label>1</label>
    </ligand>
</feature>
<feature type="binding site" evidence="1">
    <location>
        <position position="80"/>
    </location>
    <ligand>
        <name>Zn(2+)</name>
        <dbReference type="ChEBI" id="CHEBI:29105"/>
        <label>1</label>
    </ligand>
</feature>
<feature type="binding site" evidence="1">
    <location>
        <position position="503"/>
    </location>
    <ligand>
        <name>Mg(2+)</name>
        <dbReference type="ChEBI" id="CHEBI:18420"/>
    </ligand>
</feature>
<feature type="binding site" evidence="1">
    <location>
        <position position="505"/>
    </location>
    <ligand>
        <name>Mg(2+)</name>
        <dbReference type="ChEBI" id="CHEBI:18420"/>
    </ligand>
</feature>
<feature type="binding site" evidence="1">
    <location>
        <position position="507"/>
    </location>
    <ligand>
        <name>Mg(2+)</name>
        <dbReference type="ChEBI" id="CHEBI:18420"/>
    </ligand>
</feature>
<feature type="binding site" evidence="1">
    <location>
        <position position="875"/>
    </location>
    <ligand>
        <name>Zn(2+)</name>
        <dbReference type="ChEBI" id="CHEBI:29105"/>
        <label>2</label>
    </ligand>
</feature>
<feature type="binding site" evidence="1">
    <location>
        <position position="950"/>
    </location>
    <ligand>
        <name>Zn(2+)</name>
        <dbReference type="ChEBI" id="CHEBI:29105"/>
        <label>2</label>
    </ligand>
</feature>
<feature type="binding site" evidence="1">
    <location>
        <position position="957"/>
    </location>
    <ligand>
        <name>Zn(2+)</name>
        <dbReference type="ChEBI" id="CHEBI:29105"/>
        <label>2</label>
    </ligand>
</feature>
<feature type="binding site" evidence="1">
    <location>
        <position position="960"/>
    </location>
    <ligand>
        <name>Zn(2+)</name>
        <dbReference type="ChEBI" id="CHEBI:29105"/>
        <label>2</label>
    </ligand>
</feature>
<comment type="function">
    <text evidence="1">DNA-dependent RNA polymerase catalyzes the transcription of DNA into RNA using the four ribonucleoside triphosphates as substrates.</text>
</comment>
<comment type="catalytic activity">
    <reaction evidence="1">
        <text>RNA(n) + a ribonucleoside 5'-triphosphate = RNA(n+1) + diphosphate</text>
        <dbReference type="Rhea" id="RHEA:21248"/>
        <dbReference type="Rhea" id="RHEA-COMP:14527"/>
        <dbReference type="Rhea" id="RHEA-COMP:17342"/>
        <dbReference type="ChEBI" id="CHEBI:33019"/>
        <dbReference type="ChEBI" id="CHEBI:61557"/>
        <dbReference type="ChEBI" id="CHEBI:140395"/>
        <dbReference type="EC" id="2.7.7.6"/>
    </reaction>
</comment>
<comment type="cofactor">
    <cofactor evidence="1">
        <name>Mg(2+)</name>
        <dbReference type="ChEBI" id="CHEBI:18420"/>
    </cofactor>
    <text evidence="1">Binds 1 Mg(2+) ion per subunit.</text>
</comment>
<comment type="cofactor">
    <cofactor evidence="1">
        <name>Zn(2+)</name>
        <dbReference type="ChEBI" id="CHEBI:29105"/>
    </cofactor>
    <text evidence="1">Binds 2 Zn(2+) ions per subunit.</text>
</comment>
<comment type="subunit">
    <text evidence="1">The RNAP catalytic core consists of 2 alpha, 1 beta, 1 beta' and 1 omega subunit. When a sigma factor is associated with the core the holoenzyme is formed, which can initiate transcription.</text>
</comment>
<comment type="similarity">
    <text evidence="1">Belongs to the RNA polymerase beta' chain family.</text>
</comment>
<dbReference type="EC" id="2.7.7.6" evidence="1"/>
<dbReference type="EMBL" id="BX293980">
    <property type="protein sequence ID" value="CAE77616.1"/>
    <property type="molecule type" value="Genomic_DNA"/>
</dbReference>
<dbReference type="RefSeq" id="NP_975974.1">
    <property type="nucleotide sequence ID" value="NC_005364.2"/>
</dbReference>
<dbReference type="RefSeq" id="WP_011167153.1">
    <property type="nucleotide sequence ID" value="NC_005364.2"/>
</dbReference>
<dbReference type="SMR" id="Q6MRX5"/>
<dbReference type="STRING" id="272632.MSC_1009"/>
<dbReference type="KEGG" id="mmy:MSC_1009"/>
<dbReference type="PATRIC" id="fig|272632.4.peg.1096"/>
<dbReference type="eggNOG" id="COG0086">
    <property type="taxonomic scope" value="Bacteria"/>
</dbReference>
<dbReference type="HOGENOM" id="CLU_000524_3_1_14"/>
<dbReference type="Proteomes" id="UP000001016">
    <property type="component" value="Chromosome"/>
</dbReference>
<dbReference type="GO" id="GO:0000428">
    <property type="term" value="C:DNA-directed RNA polymerase complex"/>
    <property type="evidence" value="ECO:0007669"/>
    <property type="project" value="UniProtKB-KW"/>
</dbReference>
<dbReference type="GO" id="GO:0003677">
    <property type="term" value="F:DNA binding"/>
    <property type="evidence" value="ECO:0007669"/>
    <property type="project" value="UniProtKB-UniRule"/>
</dbReference>
<dbReference type="GO" id="GO:0003899">
    <property type="term" value="F:DNA-directed RNA polymerase activity"/>
    <property type="evidence" value="ECO:0007669"/>
    <property type="project" value="UniProtKB-UniRule"/>
</dbReference>
<dbReference type="GO" id="GO:0000287">
    <property type="term" value="F:magnesium ion binding"/>
    <property type="evidence" value="ECO:0007669"/>
    <property type="project" value="UniProtKB-UniRule"/>
</dbReference>
<dbReference type="GO" id="GO:0008270">
    <property type="term" value="F:zinc ion binding"/>
    <property type="evidence" value="ECO:0007669"/>
    <property type="project" value="UniProtKB-UniRule"/>
</dbReference>
<dbReference type="GO" id="GO:0006351">
    <property type="term" value="P:DNA-templated transcription"/>
    <property type="evidence" value="ECO:0007669"/>
    <property type="project" value="UniProtKB-UniRule"/>
</dbReference>
<dbReference type="CDD" id="cd02655">
    <property type="entry name" value="RNAP_beta'_C"/>
    <property type="match status" value="1"/>
</dbReference>
<dbReference type="CDD" id="cd01609">
    <property type="entry name" value="RNAP_beta'_N"/>
    <property type="match status" value="1"/>
</dbReference>
<dbReference type="Gene3D" id="1.10.132.30">
    <property type="match status" value="1"/>
</dbReference>
<dbReference type="Gene3D" id="1.10.150.390">
    <property type="match status" value="1"/>
</dbReference>
<dbReference type="Gene3D" id="1.10.1790.20">
    <property type="match status" value="1"/>
</dbReference>
<dbReference type="Gene3D" id="1.10.40.90">
    <property type="match status" value="1"/>
</dbReference>
<dbReference type="Gene3D" id="2.40.40.20">
    <property type="match status" value="1"/>
</dbReference>
<dbReference type="Gene3D" id="2.40.50.100">
    <property type="match status" value="1"/>
</dbReference>
<dbReference type="Gene3D" id="4.10.860.120">
    <property type="entry name" value="RNA polymerase II, clamp domain"/>
    <property type="match status" value="1"/>
</dbReference>
<dbReference type="Gene3D" id="1.10.274.100">
    <property type="entry name" value="RNA polymerase Rpb1, domain 3"/>
    <property type="match status" value="1"/>
</dbReference>
<dbReference type="HAMAP" id="MF_01322">
    <property type="entry name" value="RNApol_bact_RpoC"/>
    <property type="match status" value="1"/>
</dbReference>
<dbReference type="InterPro" id="IPR045867">
    <property type="entry name" value="DNA-dir_RpoC_beta_prime"/>
</dbReference>
<dbReference type="InterPro" id="IPR012754">
    <property type="entry name" value="DNA-dir_RpoC_beta_prime_bact"/>
</dbReference>
<dbReference type="InterPro" id="IPR000722">
    <property type="entry name" value="RNA_pol_asu"/>
</dbReference>
<dbReference type="InterPro" id="IPR006592">
    <property type="entry name" value="RNA_pol_N"/>
</dbReference>
<dbReference type="InterPro" id="IPR007080">
    <property type="entry name" value="RNA_pol_Rpb1_1"/>
</dbReference>
<dbReference type="InterPro" id="IPR007066">
    <property type="entry name" value="RNA_pol_Rpb1_3"/>
</dbReference>
<dbReference type="InterPro" id="IPR042102">
    <property type="entry name" value="RNA_pol_Rpb1_3_sf"/>
</dbReference>
<dbReference type="InterPro" id="IPR007083">
    <property type="entry name" value="RNA_pol_Rpb1_4"/>
</dbReference>
<dbReference type="InterPro" id="IPR007081">
    <property type="entry name" value="RNA_pol_Rpb1_5"/>
</dbReference>
<dbReference type="InterPro" id="IPR044893">
    <property type="entry name" value="RNA_pol_Rpb1_clamp_domain"/>
</dbReference>
<dbReference type="InterPro" id="IPR038120">
    <property type="entry name" value="Rpb1_funnel_sf"/>
</dbReference>
<dbReference type="NCBIfam" id="TIGR02386">
    <property type="entry name" value="rpoC_TIGR"/>
    <property type="match status" value="1"/>
</dbReference>
<dbReference type="PANTHER" id="PTHR19376">
    <property type="entry name" value="DNA-DIRECTED RNA POLYMERASE"/>
    <property type="match status" value="1"/>
</dbReference>
<dbReference type="PANTHER" id="PTHR19376:SF54">
    <property type="entry name" value="DNA-DIRECTED RNA POLYMERASE SUBUNIT BETA"/>
    <property type="match status" value="1"/>
</dbReference>
<dbReference type="Pfam" id="PF04997">
    <property type="entry name" value="RNA_pol_Rpb1_1"/>
    <property type="match status" value="1"/>
</dbReference>
<dbReference type="Pfam" id="PF00623">
    <property type="entry name" value="RNA_pol_Rpb1_2"/>
    <property type="match status" value="1"/>
</dbReference>
<dbReference type="Pfam" id="PF04983">
    <property type="entry name" value="RNA_pol_Rpb1_3"/>
    <property type="match status" value="1"/>
</dbReference>
<dbReference type="Pfam" id="PF05000">
    <property type="entry name" value="RNA_pol_Rpb1_4"/>
    <property type="match status" value="1"/>
</dbReference>
<dbReference type="Pfam" id="PF04998">
    <property type="entry name" value="RNA_pol_Rpb1_5"/>
    <property type="match status" value="1"/>
</dbReference>
<dbReference type="SMART" id="SM00663">
    <property type="entry name" value="RPOLA_N"/>
    <property type="match status" value="1"/>
</dbReference>
<dbReference type="SUPFAM" id="SSF64484">
    <property type="entry name" value="beta and beta-prime subunits of DNA dependent RNA-polymerase"/>
    <property type="match status" value="1"/>
</dbReference>
<sequence>MENLNRKKAIKIELANPDTIRSWSHGEVLKPETINYKTLKAEKDGLFDERIFGPTKNYECVCGRYKKANPMNKGKKCEKCGVELTESIVRRERMGHIELEEPVTHIWMLKVAPYRIAAILDLKAKELEEVVYFVSHIVLEQGNQKHFVEKEVLDLGSSRITKTREKLQLTILDVIDLINDPNHRDTKKANRLLEELKNTAVPFSIDEATSLISKYTGAKFGIGARAVEYLLEKVDLTKEIEAIKIQLENSKKTPNERTKLLKRLETFDSLKRSKQRPEWMVMRVIPVIPPDIRPIIQLDGGRFTTSEINDLYRRIIIRNERLKKVKEMGAPSIIVNNEKRMLQEAVDALFDNERKPKPVQRKNKRPLKSLTSVLKGKQGRFRQNLLGKRVDYSARSVIAIGPDLKMYQAGLPREMAITLFKPFVIQWLQDHEYAENVKIAEKMLLQNDPKVWEALEQVIKDRPVLLNRAPTLHRLGIQAFEPKLVKGKAIRLHPLVTTAFNADFDGDQMAVHVPITKEAVAESRALMLGSSAILGPKDGKAIVTPGQDIILGNYYLTTEEKNAKGQGMIFSSLDEAFMAYDSGQIHLNSLIGIALSALPEQKFSDKNQRLNSYLLTTVGKLYFNQIFDDNFPWINSNNIWNAKEAVKEFIYYFSQDINNVIENIQVQQPIKKKELSLIIERYFETHGARKTAEMLDKMKDLGFSFSTKSGTTISAGDVVAFTHKYDEFKEADQKVEQITDFYNMGMLTNSEKKRRIIEVWSDVKDKIQDELATVLRKDVKNPIFVMVDSGARGNISNFTQLVGMRGLMNDTKGDIKEIPIKSSFREGLTVSEYFVSTHGARKGMADIALKTADSGYLTRRLVDVSQEIVVVNEDCEPSKGFEVSAIIDTKHDNVIVPLKDRLVGRFTFEDIYDDDKNLVAFANTLIDKNIAEKIIMSGISSVVIRSVLTCDNKRGVCQKCYGLNLATASVVNIGEPVGVIAAQSIGEPGTQLTMRNFHTGGVAGNVDITQGLPRIKELLDVTTPKGAVAIISEVDGVVSEIEDYNGVFVINIVTENEEVKKYKTEFNSVLRVEQGSSVVAGQKLTEGAIDLHQLLEFGGIQDVQNYILKEVQKVYRLQGIEISDKYIEIIIKQMLNKVKITDGGDSDLLPGEVITIQNYKEVVQDCIVKSIRPPLSKAQIFGIKKAPLESSSWLSSASFQDTARVLTRAIIKGKEDKLEGLKENIMLGNLIPAGTGLTGTQEVEQLAEQYHNNEY</sequence>
<name>RPOC_MYCMS</name>
<protein>
    <recommendedName>
        <fullName evidence="1">DNA-directed RNA polymerase subunit beta'</fullName>
        <shortName evidence="1">RNAP subunit beta'</shortName>
        <ecNumber evidence="1">2.7.7.6</ecNumber>
    </recommendedName>
    <alternativeName>
        <fullName evidence="1">RNA polymerase subunit beta'</fullName>
    </alternativeName>
    <alternativeName>
        <fullName evidence="1">Transcriptase subunit beta'</fullName>
    </alternativeName>
</protein>
<accession>Q6MRX5</accession>
<gene>
    <name evidence="1" type="primary">rpoC</name>
    <name type="ordered locus">MSC_1009</name>
</gene>
<proteinExistence type="inferred from homology"/>
<evidence type="ECO:0000255" key="1">
    <source>
        <dbReference type="HAMAP-Rule" id="MF_01322"/>
    </source>
</evidence>